<protein>
    <recommendedName>
        <fullName evidence="1">Large ribosomal subunit protein bL19</fullName>
    </recommendedName>
    <alternativeName>
        <fullName evidence="2">50S ribosomal protein L19</fullName>
    </alternativeName>
</protein>
<keyword id="KW-1185">Reference proteome</keyword>
<keyword id="KW-0687">Ribonucleoprotein</keyword>
<keyword id="KW-0689">Ribosomal protein</keyword>
<gene>
    <name evidence="1" type="primary">rplS</name>
    <name type="ordered locus">Strop_1309</name>
</gene>
<reference key="1">
    <citation type="journal article" date="2007" name="Proc. Natl. Acad. Sci. U.S.A.">
        <title>Genome sequencing reveals complex secondary metabolome in the marine actinomycete Salinispora tropica.</title>
        <authorList>
            <person name="Udwary D.W."/>
            <person name="Zeigler L."/>
            <person name="Asolkar R.N."/>
            <person name="Singan V."/>
            <person name="Lapidus A."/>
            <person name="Fenical W."/>
            <person name="Jensen P.R."/>
            <person name="Moore B.S."/>
        </authorList>
    </citation>
    <scope>NUCLEOTIDE SEQUENCE [LARGE SCALE GENOMIC DNA]</scope>
    <source>
        <strain>ATCC BAA-916 / DSM 44818 / JCM 13857 / NBRC 105044 / CNB-440</strain>
    </source>
</reference>
<evidence type="ECO:0000255" key="1">
    <source>
        <dbReference type="HAMAP-Rule" id="MF_00402"/>
    </source>
</evidence>
<evidence type="ECO:0000305" key="2"/>
<name>RL19_SALTO</name>
<proteinExistence type="inferred from homology"/>
<feature type="chain" id="PRO_1000080370" description="Large ribosomal subunit protein bL19">
    <location>
        <begin position="1"/>
        <end position="118"/>
    </location>
</feature>
<accession>A4X4H9</accession>
<comment type="function">
    <text evidence="1">This protein is located at the 30S-50S ribosomal subunit interface and may play a role in the structure and function of the aminoacyl-tRNA binding site.</text>
</comment>
<comment type="similarity">
    <text evidence="1">Belongs to the bacterial ribosomal protein bL19 family.</text>
</comment>
<organism>
    <name type="scientific">Salinispora tropica (strain ATCC BAA-916 / DSM 44818 / JCM 13857 / NBRC 105044 / CNB-440)</name>
    <dbReference type="NCBI Taxonomy" id="369723"/>
    <lineage>
        <taxon>Bacteria</taxon>
        <taxon>Bacillati</taxon>
        <taxon>Actinomycetota</taxon>
        <taxon>Actinomycetes</taxon>
        <taxon>Micromonosporales</taxon>
        <taxon>Micromonosporaceae</taxon>
        <taxon>Salinispora</taxon>
    </lineage>
</organism>
<dbReference type="EMBL" id="CP000667">
    <property type="protein sequence ID" value="ABP53779.1"/>
    <property type="molecule type" value="Genomic_DNA"/>
</dbReference>
<dbReference type="RefSeq" id="WP_011905211.1">
    <property type="nucleotide sequence ID" value="NC_009380.1"/>
</dbReference>
<dbReference type="SMR" id="A4X4H9"/>
<dbReference type="STRING" id="369723.Strop_1309"/>
<dbReference type="KEGG" id="stp:Strop_1309"/>
<dbReference type="PATRIC" id="fig|369723.5.peg.1333"/>
<dbReference type="eggNOG" id="COG0335">
    <property type="taxonomic scope" value="Bacteria"/>
</dbReference>
<dbReference type="HOGENOM" id="CLU_103507_2_1_11"/>
<dbReference type="Proteomes" id="UP000000235">
    <property type="component" value="Chromosome"/>
</dbReference>
<dbReference type="GO" id="GO:0022625">
    <property type="term" value="C:cytosolic large ribosomal subunit"/>
    <property type="evidence" value="ECO:0007669"/>
    <property type="project" value="TreeGrafter"/>
</dbReference>
<dbReference type="GO" id="GO:0003735">
    <property type="term" value="F:structural constituent of ribosome"/>
    <property type="evidence" value="ECO:0007669"/>
    <property type="project" value="InterPro"/>
</dbReference>
<dbReference type="GO" id="GO:0006412">
    <property type="term" value="P:translation"/>
    <property type="evidence" value="ECO:0007669"/>
    <property type="project" value="UniProtKB-UniRule"/>
</dbReference>
<dbReference type="FunFam" id="2.30.30.790:FF:000001">
    <property type="entry name" value="50S ribosomal protein L19"/>
    <property type="match status" value="1"/>
</dbReference>
<dbReference type="Gene3D" id="2.30.30.790">
    <property type="match status" value="1"/>
</dbReference>
<dbReference type="HAMAP" id="MF_00402">
    <property type="entry name" value="Ribosomal_bL19"/>
    <property type="match status" value="1"/>
</dbReference>
<dbReference type="InterPro" id="IPR001857">
    <property type="entry name" value="Ribosomal_bL19"/>
</dbReference>
<dbReference type="InterPro" id="IPR018257">
    <property type="entry name" value="Ribosomal_bL19_CS"/>
</dbReference>
<dbReference type="InterPro" id="IPR038657">
    <property type="entry name" value="Ribosomal_bL19_sf"/>
</dbReference>
<dbReference type="InterPro" id="IPR008991">
    <property type="entry name" value="Translation_prot_SH3-like_sf"/>
</dbReference>
<dbReference type="NCBIfam" id="TIGR01024">
    <property type="entry name" value="rplS_bact"/>
    <property type="match status" value="1"/>
</dbReference>
<dbReference type="PANTHER" id="PTHR15680:SF9">
    <property type="entry name" value="LARGE RIBOSOMAL SUBUNIT PROTEIN BL19M"/>
    <property type="match status" value="1"/>
</dbReference>
<dbReference type="PANTHER" id="PTHR15680">
    <property type="entry name" value="RIBOSOMAL PROTEIN L19"/>
    <property type="match status" value="1"/>
</dbReference>
<dbReference type="Pfam" id="PF01245">
    <property type="entry name" value="Ribosomal_L19"/>
    <property type="match status" value="1"/>
</dbReference>
<dbReference type="PIRSF" id="PIRSF002191">
    <property type="entry name" value="Ribosomal_L19"/>
    <property type="match status" value="1"/>
</dbReference>
<dbReference type="PRINTS" id="PR00061">
    <property type="entry name" value="RIBOSOMALL19"/>
</dbReference>
<dbReference type="SUPFAM" id="SSF50104">
    <property type="entry name" value="Translation proteins SH3-like domain"/>
    <property type="match status" value="1"/>
</dbReference>
<dbReference type="PROSITE" id="PS01015">
    <property type="entry name" value="RIBOSOMAL_L19"/>
    <property type="match status" value="1"/>
</dbReference>
<sequence>MNILDALDAQSKRTDLPDFRAGDTVKVHARVVEGNRSRVQIFQGVVIRRQGDGLRETFLVRKISFGVGVERTYPVNSPAIDRIEVVTRGDVRRAKLYYLRELRGKKAKIKEKREKQPS</sequence>